<dbReference type="EC" id="3.4.-.-" evidence="6"/>
<dbReference type="EMBL" id="GL636489">
    <property type="protein sequence ID" value="EFW20252.1"/>
    <property type="molecule type" value="Genomic_DNA"/>
</dbReference>
<dbReference type="SMR" id="E9CZZ9"/>
<dbReference type="STRING" id="443226.E9CZZ9"/>
<dbReference type="VEuPathDB" id="FungiDB:CPSG_03427"/>
<dbReference type="VEuPathDB" id="FungiDB:D8B26_003329"/>
<dbReference type="eggNOG" id="KOG2194">
    <property type="taxonomic scope" value="Eukaryota"/>
</dbReference>
<dbReference type="HOGENOM" id="CLU_006412_1_0_1"/>
<dbReference type="OMA" id="TPWPVTI"/>
<dbReference type="OrthoDB" id="30877at33183"/>
<dbReference type="Proteomes" id="UP000002497">
    <property type="component" value="Unassembled WGS sequence"/>
</dbReference>
<dbReference type="GO" id="GO:0005774">
    <property type="term" value="C:vacuolar membrane"/>
    <property type="evidence" value="ECO:0007669"/>
    <property type="project" value="UniProtKB-SubCell"/>
</dbReference>
<dbReference type="GO" id="GO:0046872">
    <property type="term" value="F:metal ion binding"/>
    <property type="evidence" value="ECO:0007669"/>
    <property type="project" value="UniProtKB-KW"/>
</dbReference>
<dbReference type="GO" id="GO:0008235">
    <property type="term" value="F:metalloexopeptidase activity"/>
    <property type="evidence" value="ECO:0007669"/>
    <property type="project" value="InterPro"/>
</dbReference>
<dbReference type="GO" id="GO:0006508">
    <property type="term" value="P:proteolysis"/>
    <property type="evidence" value="ECO:0007669"/>
    <property type="project" value="UniProtKB-KW"/>
</dbReference>
<dbReference type="CDD" id="cd03875">
    <property type="entry name" value="M28_Fxna_like"/>
    <property type="match status" value="1"/>
</dbReference>
<dbReference type="FunFam" id="3.40.630.10:FF:000057">
    <property type="entry name" value="Vacuolar membrane protease"/>
    <property type="match status" value="1"/>
</dbReference>
<dbReference type="Gene3D" id="3.40.630.10">
    <property type="entry name" value="Zn peptidases"/>
    <property type="match status" value="1"/>
</dbReference>
<dbReference type="InterPro" id="IPR048024">
    <property type="entry name" value="Fxna-like_M28_dom"/>
</dbReference>
<dbReference type="InterPro" id="IPR045175">
    <property type="entry name" value="M28_fam"/>
</dbReference>
<dbReference type="InterPro" id="IPR007484">
    <property type="entry name" value="Peptidase_M28"/>
</dbReference>
<dbReference type="InterPro" id="IPR053975">
    <property type="entry name" value="PFF1_C"/>
</dbReference>
<dbReference type="InterPro" id="IPR053976">
    <property type="entry name" value="PFF1_TM"/>
</dbReference>
<dbReference type="PANTHER" id="PTHR12147">
    <property type="entry name" value="METALLOPEPTIDASE M28 FAMILY MEMBER"/>
    <property type="match status" value="1"/>
</dbReference>
<dbReference type="PANTHER" id="PTHR12147:SF58">
    <property type="entry name" value="VACUOLAR MEMBRANE PROTEASE"/>
    <property type="match status" value="1"/>
</dbReference>
<dbReference type="Pfam" id="PF04389">
    <property type="entry name" value="Peptidase_M28"/>
    <property type="match status" value="1"/>
</dbReference>
<dbReference type="Pfam" id="PF22250">
    <property type="entry name" value="PFF1_C"/>
    <property type="match status" value="1"/>
</dbReference>
<dbReference type="Pfam" id="PF22251">
    <property type="entry name" value="PFF1_TM"/>
    <property type="match status" value="1"/>
</dbReference>
<dbReference type="SUPFAM" id="SSF53187">
    <property type="entry name" value="Zn-dependent exopeptidases"/>
    <property type="match status" value="1"/>
</dbReference>
<keyword id="KW-0325">Glycoprotein</keyword>
<keyword id="KW-0378">Hydrolase</keyword>
<keyword id="KW-0472">Membrane</keyword>
<keyword id="KW-0479">Metal-binding</keyword>
<keyword id="KW-0482">Metalloprotease</keyword>
<keyword id="KW-0645">Protease</keyword>
<keyword id="KW-1185">Reference proteome</keyword>
<keyword id="KW-0812">Transmembrane</keyword>
<keyword id="KW-1133">Transmembrane helix</keyword>
<keyword id="KW-0926">Vacuole</keyword>
<keyword id="KW-0862">Zinc</keyword>
<reference key="1">
    <citation type="submission" date="2010-03" db="EMBL/GenBank/DDBJ databases">
        <title>The genome sequence of Coccidioides posadasii strain Silveira.</title>
        <authorList>
            <consortium name="The Broad Institute Genome Sequencing Center for Infectious Disease"/>
            <person name="Neafsey D."/>
            <person name="Orbach M."/>
            <person name="Henn M.R."/>
            <person name="Cole G.T."/>
            <person name="Galgiani J."/>
            <person name="Gardner M.J."/>
            <person name="Kirkland T.N."/>
            <person name="Taylor J.W."/>
            <person name="Young S.K."/>
            <person name="Zeng Q."/>
            <person name="Koehrsen M."/>
            <person name="Alvarado L."/>
            <person name="Berlin A."/>
            <person name="Borenstein D."/>
            <person name="Chapman S.B."/>
            <person name="Chen Z."/>
            <person name="Engels R."/>
            <person name="Freedman E."/>
            <person name="Gellesch M."/>
            <person name="Goldberg J."/>
            <person name="Griggs A."/>
            <person name="Gujja S."/>
            <person name="Heilman E."/>
            <person name="Heiman D."/>
            <person name="Howarth C."/>
            <person name="Jen D."/>
            <person name="Larson L."/>
            <person name="Mehta T."/>
            <person name="Neiman D."/>
            <person name="Park D."/>
            <person name="Pearson M."/>
            <person name="Richards J."/>
            <person name="Roberts A."/>
            <person name="Saif S."/>
            <person name="Shea T."/>
            <person name="Shenoy N."/>
            <person name="Sisk P."/>
            <person name="Stolte C."/>
            <person name="Sykes S."/>
            <person name="Walk T."/>
            <person name="White J."/>
            <person name="Yandava C."/>
            <person name="Haas B."/>
            <person name="Nusbaum C."/>
            <person name="Birren B."/>
        </authorList>
    </citation>
    <scope>NUCLEOTIDE SEQUENCE [LARGE SCALE GENOMIC DNA]</scope>
    <source>
        <strain>RMSCC 757 / Silveira</strain>
    </source>
</reference>
<feature type="chain" id="PRO_0000411713" description="Vacuolar membrane protease">
    <location>
        <begin position="1"/>
        <end position="1012"/>
    </location>
</feature>
<feature type="topological domain" description="Cytoplasmic" evidence="1">
    <location>
        <begin position="1"/>
        <end position="60"/>
    </location>
</feature>
<feature type="transmembrane region" description="Helical; Name=1" evidence="3">
    <location>
        <begin position="61"/>
        <end position="81"/>
    </location>
</feature>
<feature type="topological domain" description="Vacuolar" evidence="1">
    <location>
        <begin position="82"/>
        <end position="432"/>
    </location>
</feature>
<feature type="transmembrane region" description="Helical; Name=2" evidence="3">
    <location>
        <begin position="433"/>
        <end position="453"/>
    </location>
</feature>
<feature type="topological domain" description="Cytoplasmic" evidence="1">
    <location>
        <begin position="454"/>
        <end position="487"/>
    </location>
</feature>
<feature type="transmembrane region" description="Helical; Name=3" evidence="3">
    <location>
        <begin position="488"/>
        <end position="508"/>
    </location>
</feature>
<feature type="topological domain" description="Vacuolar" evidence="1">
    <location>
        <begin position="509"/>
        <end position="518"/>
    </location>
</feature>
<feature type="transmembrane region" description="Helical; Name=4" evidence="3">
    <location>
        <begin position="519"/>
        <end position="539"/>
    </location>
</feature>
<feature type="topological domain" description="Cytoplasmic" evidence="1">
    <location>
        <begin position="540"/>
        <end position="550"/>
    </location>
</feature>
<feature type="transmembrane region" description="Helical; Name=5" evidence="3">
    <location>
        <begin position="551"/>
        <end position="571"/>
    </location>
</feature>
<feature type="topological domain" description="Vacuolar" evidence="1">
    <location>
        <begin position="572"/>
        <end position="575"/>
    </location>
</feature>
<feature type="transmembrane region" description="Helical; Name=6" evidence="3">
    <location>
        <begin position="576"/>
        <end position="596"/>
    </location>
</feature>
<feature type="topological domain" description="Cytoplasmic" evidence="1">
    <location>
        <begin position="597"/>
        <end position="710"/>
    </location>
</feature>
<feature type="transmembrane region" description="Helical; Name=7" evidence="3">
    <location>
        <begin position="711"/>
        <end position="731"/>
    </location>
</feature>
<feature type="topological domain" description="Vacuolar" evidence="1">
    <location>
        <begin position="732"/>
        <end position="743"/>
    </location>
</feature>
<feature type="transmembrane region" description="Helical; Name=8" evidence="3">
    <location>
        <begin position="744"/>
        <end position="764"/>
    </location>
</feature>
<feature type="topological domain" description="Cytoplasmic" evidence="1">
    <location>
        <begin position="765"/>
        <end position="777"/>
    </location>
</feature>
<feature type="transmembrane region" description="Helical; Name=9" evidence="3">
    <location>
        <begin position="778"/>
        <end position="798"/>
    </location>
</feature>
<feature type="topological domain" description="Vacuolar" evidence="1">
    <location>
        <begin position="799"/>
        <end position="1012"/>
    </location>
</feature>
<feature type="region of interest" description="Disordered" evidence="5">
    <location>
        <begin position="614"/>
        <end position="660"/>
    </location>
</feature>
<feature type="compositionally biased region" description="Polar residues" evidence="5">
    <location>
        <begin position="614"/>
        <end position="629"/>
    </location>
</feature>
<feature type="active site" description="Proton acceptor" evidence="2">
    <location>
        <position position="261"/>
    </location>
</feature>
<feature type="binding site" evidence="2">
    <location>
        <position position="215"/>
    </location>
    <ligand>
        <name>Zn(2+)</name>
        <dbReference type="ChEBI" id="CHEBI:29105"/>
        <label>1</label>
        <note>catalytic</note>
    </ligand>
</feature>
<feature type="binding site" evidence="2">
    <location>
        <position position="227"/>
    </location>
    <ligand>
        <name>Zn(2+)</name>
        <dbReference type="ChEBI" id="CHEBI:29105"/>
        <label>1</label>
        <note>catalytic</note>
    </ligand>
</feature>
<feature type="binding site" evidence="2">
    <location>
        <position position="227"/>
    </location>
    <ligand>
        <name>Zn(2+)</name>
        <dbReference type="ChEBI" id="CHEBI:29105"/>
        <label>2</label>
        <note>catalytic</note>
    </ligand>
</feature>
<feature type="binding site" evidence="2">
    <location>
        <position position="262"/>
    </location>
    <ligand>
        <name>Zn(2+)</name>
        <dbReference type="ChEBI" id="CHEBI:29105"/>
        <label>2</label>
        <note>catalytic</note>
    </ligand>
</feature>
<feature type="binding site" evidence="2">
    <location>
        <position position="287"/>
    </location>
    <ligand>
        <name>Zn(2+)</name>
        <dbReference type="ChEBI" id="CHEBI:29105"/>
        <label>1</label>
        <note>catalytic</note>
    </ligand>
</feature>
<feature type="binding site" evidence="2">
    <location>
        <position position="360"/>
    </location>
    <ligand>
        <name>Zn(2+)</name>
        <dbReference type="ChEBI" id="CHEBI:29105"/>
        <label>2</label>
        <note>catalytic</note>
    </ligand>
</feature>
<feature type="site" description="Transition state stabilizer" evidence="2">
    <location>
        <position position="359"/>
    </location>
</feature>
<feature type="glycosylation site" description="N-linked (GlcNAc...) asparagine" evidence="4">
    <location>
        <position position="159"/>
    </location>
</feature>
<feature type="glycosylation site" description="N-linked (GlcNAc...) asparagine" evidence="4">
    <location>
        <position position="842"/>
    </location>
</feature>
<feature type="glycosylation site" description="N-linked (GlcNAc...) asparagine" evidence="4">
    <location>
        <position position="878"/>
    </location>
</feature>
<proteinExistence type="inferred from homology"/>
<comment type="function">
    <text evidence="1">May be involved in vacuolar sorting and osmoregulation.</text>
</comment>
<comment type="cofactor">
    <cofactor evidence="2">
        <name>Zn(2+)</name>
        <dbReference type="ChEBI" id="CHEBI:29105"/>
    </cofactor>
    <text evidence="2">Binds 2 Zn(2+) ions per subunit.</text>
</comment>
<comment type="subcellular location">
    <subcellularLocation>
        <location evidence="1">Vacuole membrane</location>
        <topology evidence="3">Multi-pass membrane protein</topology>
    </subcellularLocation>
</comment>
<comment type="similarity">
    <text evidence="6">Belongs to the peptidase M28 family.</text>
</comment>
<evidence type="ECO:0000250" key="1">
    <source>
        <dbReference type="UniProtKB" id="P38244"/>
    </source>
</evidence>
<evidence type="ECO:0000250" key="2">
    <source>
        <dbReference type="UniProtKB" id="P80561"/>
    </source>
</evidence>
<evidence type="ECO:0000255" key="3"/>
<evidence type="ECO:0000255" key="4">
    <source>
        <dbReference type="PROSITE-ProRule" id="PRU00498"/>
    </source>
</evidence>
<evidence type="ECO:0000256" key="5">
    <source>
        <dbReference type="SAM" id="MobiDB-lite"/>
    </source>
</evidence>
<evidence type="ECO:0000305" key="6"/>
<sequence>MRRSTDPRNLLVRRGPLLVDGESAISELDPGFFPTGDAPKMSSTTRRRFNLIAFTPGPVTVISSLVYLALLIPLLLVHTIVPSAPKSNPKGVDLSEAWNDLQHLTSGFHPYNSHRNDEIHQWLLQRVGHILDASRKAHEDDAMGSVAPDVFVFDDQQSNLTFSGGGVGNKPITGVYFEGKNIIVYIRGLEDDKENWWDSPGGKPKGKGGVLVNAHYDSVSTGFGATDDGVGVVSVLQLIKFFTSPGNLPRKGLVLLLNNGEEDYLNGARAYSQHPLSKYTHTFLNLEGAGAGGRAALFRTTDTEVTRFYKSSPHPFGSVLAADGFKMGLIRSETDYAVFKGVLGLRGLDVAFIEPRARYHTDQDDVRHTSIDSVWHMLSAAIATTKGLVSYTGSEFDGRAPGKGMVNSGVGTHGVWFDLFGSSFAVFRLHTLFAISVTLLVVCPIVLFVIGIILSKMDKMYLFSIHETIPETKEKVSVRGLRGLFRYPIILVVSSGILIGLSYLLAKVNPFIVHSSSYAVWSMMLSSWIFMTWFLSCIADFFRPSALHRAYTFTWQLLVMWVLLVISTVYVNQHDIAAGYFIVFYFAGTFLATLISYLELFALPNKTQYAREQSQYPSRLGSNRSSRILSPSADELPTGGDNNGEIYDGEEEPTESSSLLGRQRRTTFANYTRTGRDLASSESGTYEDHSETGVFGEEQKWSASLPTWTWVLQFLFVGPVVIMFIGQLGLFLTSAMNQVGADGVGLLVVYIAIAVFSVLLLIPLSPFIHRFTYHVPTFLLLVFIATLIYNLAAFPFSAENRLKIFFVQELNLDTGRNQVSLTGVDPYVQDIIRAIPSASKENISCDSELDSGRRKCSWPGLAPEVVQDEPTDRWLSFNISKPSSQETKDTPVLHARLHVSGKNTRACRVNFERPIRDYSLPGSALDDRMPHTLPQGISEIRLWSRTWENVWTVDVQWDAEDMDELHGRVVCLWSDANQLGSIPALDELRLFAPPWVAISKLKDGLVEVSRGF</sequence>
<protein>
    <recommendedName>
        <fullName evidence="1">Vacuolar membrane protease</fullName>
        <ecNumber evidence="6">3.4.-.-</ecNumber>
    </recommendedName>
    <alternativeName>
        <fullName evidence="1">FXNA-related family protease 1</fullName>
    </alternativeName>
</protein>
<gene>
    <name type="ORF">CPSG_03427</name>
</gene>
<organism>
    <name type="scientific">Coccidioides posadasii (strain RMSCC 757 / Silveira)</name>
    <name type="common">Valley fever fungus</name>
    <dbReference type="NCBI Taxonomy" id="443226"/>
    <lineage>
        <taxon>Eukaryota</taxon>
        <taxon>Fungi</taxon>
        <taxon>Dikarya</taxon>
        <taxon>Ascomycota</taxon>
        <taxon>Pezizomycotina</taxon>
        <taxon>Eurotiomycetes</taxon>
        <taxon>Eurotiomycetidae</taxon>
        <taxon>Onygenales</taxon>
        <taxon>Onygenaceae</taxon>
        <taxon>Coccidioides</taxon>
    </lineage>
</organism>
<accession>E9CZZ9</accession>
<name>PFF1_COCPS</name>